<feature type="chain" id="PRO_1000163976" description="Ornithine carbamoyltransferase">
    <location>
        <begin position="1"/>
        <end position="315"/>
    </location>
</feature>
<feature type="binding site" evidence="2">
    <location>
        <begin position="53"/>
        <end position="56"/>
    </location>
    <ligand>
        <name>carbamoyl phosphate</name>
        <dbReference type="ChEBI" id="CHEBI:58228"/>
    </ligand>
</feature>
<feature type="binding site" evidence="2">
    <location>
        <position position="80"/>
    </location>
    <ligand>
        <name>carbamoyl phosphate</name>
        <dbReference type="ChEBI" id="CHEBI:58228"/>
    </ligand>
</feature>
<feature type="binding site" evidence="2">
    <location>
        <position position="104"/>
    </location>
    <ligand>
        <name>carbamoyl phosphate</name>
        <dbReference type="ChEBI" id="CHEBI:58228"/>
    </ligand>
</feature>
<feature type="binding site" evidence="2">
    <location>
        <begin position="131"/>
        <end position="134"/>
    </location>
    <ligand>
        <name>carbamoyl phosphate</name>
        <dbReference type="ChEBI" id="CHEBI:58228"/>
    </ligand>
</feature>
<feature type="binding site" evidence="2">
    <location>
        <position position="163"/>
    </location>
    <ligand>
        <name>L-ornithine</name>
        <dbReference type="ChEBI" id="CHEBI:46911"/>
    </ligand>
</feature>
<feature type="binding site" evidence="2">
    <location>
        <position position="227"/>
    </location>
    <ligand>
        <name>L-ornithine</name>
        <dbReference type="ChEBI" id="CHEBI:46911"/>
    </ligand>
</feature>
<feature type="binding site" evidence="2">
    <location>
        <begin position="231"/>
        <end position="232"/>
    </location>
    <ligand>
        <name>L-ornithine</name>
        <dbReference type="ChEBI" id="CHEBI:46911"/>
    </ligand>
</feature>
<feature type="binding site" evidence="2">
    <location>
        <begin position="267"/>
        <end position="268"/>
    </location>
    <ligand>
        <name>carbamoyl phosphate</name>
        <dbReference type="ChEBI" id="CHEBI:58228"/>
    </ligand>
</feature>
<feature type="binding site" evidence="2">
    <location>
        <position position="295"/>
    </location>
    <ligand>
        <name>carbamoyl phosphate</name>
        <dbReference type="ChEBI" id="CHEBI:58228"/>
    </ligand>
</feature>
<keyword id="KW-0056">Arginine metabolism</keyword>
<keyword id="KW-0963">Cytoplasm</keyword>
<keyword id="KW-0808">Transferase</keyword>
<comment type="function">
    <text evidence="1">Reversibly catalyzes the transfer of the carbamoyl group from carbamoyl phosphate (CP) to the N(epsilon) atom of ornithine (ORN) to produce L-citrulline.</text>
</comment>
<comment type="catalytic activity">
    <reaction evidence="2">
        <text>carbamoyl phosphate + L-ornithine = L-citrulline + phosphate + H(+)</text>
        <dbReference type="Rhea" id="RHEA:19513"/>
        <dbReference type="ChEBI" id="CHEBI:15378"/>
        <dbReference type="ChEBI" id="CHEBI:43474"/>
        <dbReference type="ChEBI" id="CHEBI:46911"/>
        <dbReference type="ChEBI" id="CHEBI:57743"/>
        <dbReference type="ChEBI" id="CHEBI:58228"/>
        <dbReference type="EC" id="2.1.3.3"/>
    </reaction>
</comment>
<comment type="pathway">
    <text evidence="2">Amino-acid degradation; L-arginine degradation via ADI pathway; carbamoyl phosphate from L-arginine: step 2/2.</text>
</comment>
<comment type="subcellular location">
    <subcellularLocation>
        <location evidence="2">Cytoplasm</location>
    </subcellularLocation>
</comment>
<comment type="similarity">
    <text evidence="2">Belongs to the aspartate/ornithine carbamoyltransferase superfamily. OTCase family.</text>
</comment>
<evidence type="ECO:0000250" key="1"/>
<evidence type="ECO:0000255" key="2">
    <source>
        <dbReference type="HAMAP-Rule" id="MF_01109"/>
    </source>
</evidence>
<dbReference type="EC" id="2.1.3.3" evidence="2"/>
<dbReference type="EMBL" id="AP011115">
    <property type="protein sequence ID" value="BAH48930.1"/>
    <property type="molecule type" value="Genomic_DNA"/>
</dbReference>
<dbReference type="RefSeq" id="WP_012687932.1">
    <property type="nucleotide sequence ID" value="NC_012522.1"/>
</dbReference>
<dbReference type="SMR" id="C1ASZ8"/>
<dbReference type="STRING" id="632772.ROP_06830"/>
<dbReference type="KEGG" id="rop:ROP_06830"/>
<dbReference type="PATRIC" id="fig|632772.20.peg.744"/>
<dbReference type="HOGENOM" id="CLU_043846_3_2_11"/>
<dbReference type="OrthoDB" id="9802587at2"/>
<dbReference type="UniPathway" id="UPA00254">
    <property type="reaction ID" value="UER00365"/>
</dbReference>
<dbReference type="Proteomes" id="UP000002212">
    <property type="component" value="Chromosome"/>
</dbReference>
<dbReference type="GO" id="GO:0005737">
    <property type="term" value="C:cytoplasm"/>
    <property type="evidence" value="ECO:0007669"/>
    <property type="project" value="UniProtKB-SubCell"/>
</dbReference>
<dbReference type="GO" id="GO:0016597">
    <property type="term" value="F:amino acid binding"/>
    <property type="evidence" value="ECO:0007669"/>
    <property type="project" value="InterPro"/>
</dbReference>
<dbReference type="GO" id="GO:0004585">
    <property type="term" value="F:ornithine carbamoyltransferase activity"/>
    <property type="evidence" value="ECO:0007669"/>
    <property type="project" value="UniProtKB-UniRule"/>
</dbReference>
<dbReference type="GO" id="GO:0042450">
    <property type="term" value="P:arginine biosynthetic process via ornithine"/>
    <property type="evidence" value="ECO:0007669"/>
    <property type="project" value="TreeGrafter"/>
</dbReference>
<dbReference type="GO" id="GO:0019547">
    <property type="term" value="P:arginine catabolic process to ornithine"/>
    <property type="evidence" value="ECO:0007669"/>
    <property type="project" value="UniProtKB-UniRule"/>
</dbReference>
<dbReference type="GO" id="GO:0019240">
    <property type="term" value="P:citrulline biosynthetic process"/>
    <property type="evidence" value="ECO:0007669"/>
    <property type="project" value="TreeGrafter"/>
</dbReference>
<dbReference type="FunFam" id="3.40.50.1370:FF:000008">
    <property type="entry name" value="Ornithine carbamoyltransferase"/>
    <property type="match status" value="1"/>
</dbReference>
<dbReference type="Gene3D" id="3.40.50.1370">
    <property type="entry name" value="Aspartate/ornithine carbamoyltransferase"/>
    <property type="match status" value="2"/>
</dbReference>
<dbReference type="HAMAP" id="MF_01109">
    <property type="entry name" value="OTCase"/>
    <property type="match status" value="1"/>
</dbReference>
<dbReference type="InterPro" id="IPR006132">
    <property type="entry name" value="Asp/Orn_carbamoyltranf_P-bd"/>
</dbReference>
<dbReference type="InterPro" id="IPR006130">
    <property type="entry name" value="Asp/Orn_carbamoylTrfase"/>
</dbReference>
<dbReference type="InterPro" id="IPR036901">
    <property type="entry name" value="Asp/Orn_carbamoylTrfase_sf"/>
</dbReference>
<dbReference type="InterPro" id="IPR006131">
    <property type="entry name" value="Asp_carbamoyltransf_Asp/Orn-bd"/>
</dbReference>
<dbReference type="InterPro" id="IPR002292">
    <property type="entry name" value="Orn/put_carbamltrans"/>
</dbReference>
<dbReference type="InterPro" id="IPR024904">
    <property type="entry name" value="OTCase_ArgI"/>
</dbReference>
<dbReference type="NCBIfam" id="TIGR00658">
    <property type="entry name" value="orni_carb_tr"/>
    <property type="match status" value="1"/>
</dbReference>
<dbReference type="NCBIfam" id="NF001986">
    <property type="entry name" value="PRK00779.1"/>
    <property type="match status" value="1"/>
</dbReference>
<dbReference type="PANTHER" id="PTHR45753">
    <property type="entry name" value="ORNITHINE CARBAMOYLTRANSFERASE, MITOCHONDRIAL"/>
    <property type="match status" value="1"/>
</dbReference>
<dbReference type="PANTHER" id="PTHR45753:SF3">
    <property type="entry name" value="ORNITHINE TRANSCARBAMYLASE, MITOCHONDRIAL"/>
    <property type="match status" value="1"/>
</dbReference>
<dbReference type="Pfam" id="PF00185">
    <property type="entry name" value="OTCace"/>
    <property type="match status" value="1"/>
</dbReference>
<dbReference type="Pfam" id="PF02729">
    <property type="entry name" value="OTCace_N"/>
    <property type="match status" value="1"/>
</dbReference>
<dbReference type="PRINTS" id="PR00100">
    <property type="entry name" value="AOTCASE"/>
</dbReference>
<dbReference type="PRINTS" id="PR00102">
    <property type="entry name" value="OTCASE"/>
</dbReference>
<dbReference type="SUPFAM" id="SSF53671">
    <property type="entry name" value="Aspartate/ornithine carbamoyltransferase"/>
    <property type="match status" value="1"/>
</dbReference>
<dbReference type="PROSITE" id="PS00097">
    <property type="entry name" value="CARBAMOYLTRANSFERASE"/>
    <property type="match status" value="1"/>
</dbReference>
<reference key="1">
    <citation type="submission" date="2009-03" db="EMBL/GenBank/DDBJ databases">
        <title>Comparison of the complete genome sequences of Rhodococcus erythropolis PR4 and Rhodococcus opacus B4.</title>
        <authorList>
            <person name="Takarada H."/>
            <person name="Sekine M."/>
            <person name="Hosoyama A."/>
            <person name="Yamada R."/>
            <person name="Fujisawa T."/>
            <person name="Omata S."/>
            <person name="Shimizu A."/>
            <person name="Tsukatani N."/>
            <person name="Tanikawa S."/>
            <person name="Fujita N."/>
            <person name="Harayama S."/>
        </authorList>
    </citation>
    <scope>NUCLEOTIDE SEQUENCE [LARGE SCALE GENOMIC DNA]</scope>
    <source>
        <strain>B4</strain>
    </source>
</reference>
<sequence length="315" mass="33990">MTTVVKHFLRDDDLTPEQQAEVLELAARLKKAPFAERPLEGPRGVGVIFEKNSTRTRFSFEMGIAQLGGHAIVVDGRSTQLGREETLQDTGRVLSRYVDAVVWRTFGQKRLEAMASGADVPIVNALSDEFHPCQVLADLQTLAERKGSLKGLKLTYLGDGANNMAHSLMLGGVTAGVDVTIASPEGFAPLPWVVEAARARAADTGATITLTEDPQAAVVGADALVTDTWTSMGQENDGLDRVGPFRPFQINEALLAKAAADAVVLHCLPAHRGEEITDEVLDGPQSVVWDEAENRLHAQKALLVWLLAQRTGNRP</sequence>
<organism>
    <name type="scientific">Rhodococcus opacus (strain B4)</name>
    <dbReference type="NCBI Taxonomy" id="632772"/>
    <lineage>
        <taxon>Bacteria</taxon>
        <taxon>Bacillati</taxon>
        <taxon>Actinomycetota</taxon>
        <taxon>Actinomycetes</taxon>
        <taxon>Mycobacteriales</taxon>
        <taxon>Nocardiaceae</taxon>
        <taxon>Rhodococcus</taxon>
    </lineage>
</organism>
<protein>
    <recommendedName>
        <fullName evidence="2">Ornithine carbamoyltransferase</fullName>
        <shortName evidence="2">OTCase</shortName>
        <ecNumber evidence="2">2.1.3.3</ecNumber>
    </recommendedName>
</protein>
<gene>
    <name evidence="2" type="primary">arcB</name>
    <name type="ordered locus">ROP_06830</name>
</gene>
<name>OTC_RHOOB</name>
<accession>C1ASZ8</accession>
<proteinExistence type="inferred from homology"/>